<feature type="chain" id="PRO_0000163694" description="1-deoxy-D-xylulose 5-phosphate reductoisomerase">
    <location>
        <begin position="1"/>
        <end position="404"/>
    </location>
</feature>
<feature type="binding site" evidence="1">
    <location>
        <position position="5"/>
    </location>
    <ligand>
        <name>NADPH</name>
        <dbReference type="ChEBI" id="CHEBI:57783"/>
    </ligand>
</feature>
<feature type="binding site" evidence="1">
    <location>
        <position position="6"/>
    </location>
    <ligand>
        <name>NADPH</name>
        <dbReference type="ChEBI" id="CHEBI:57783"/>
    </ligand>
</feature>
<feature type="binding site" evidence="1">
    <location>
        <position position="7"/>
    </location>
    <ligand>
        <name>NADPH</name>
        <dbReference type="ChEBI" id="CHEBI:57783"/>
    </ligand>
</feature>
<feature type="binding site" evidence="1">
    <location>
        <position position="8"/>
    </location>
    <ligand>
        <name>NADPH</name>
        <dbReference type="ChEBI" id="CHEBI:57783"/>
    </ligand>
</feature>
<feature type="binding site" evidence="1">
    <location>
        <position position="31"/>
    </location>
    <ligand>
        <name>NADPH</name>
        <dbReference type="ChEBI" id="CHEBI:57783"/>
    </ligand>
</feature>
<feature type="binding site" evidence="1">
    <location>
        <position position="32"/>
    </location>
    <ligand>
        <name>NADPH</name>
        <dbReference type="ChEBI" id="CHEBI:57783"/>
    </ligand>
</feature>
<feature type="binding site" evidence="1">
    <location>
        <position position="33"/>
    </location>
    <ligand>
        <name>NADPH</name>
        <dbReference type="ChEBI" id="CHEBI:57783"/>
    </ligand>
</feature>
<feature type="binding site" evidence="1">
    <location>
        <position position="121"/>
    </location>
    <ligand>
        <name>NADPH</name>
        <dbReference type="ChEBI" id="CHEBI:57783"/>
    </ligand>
</feature>
<feature type="binding site" evidence="1">
    <location>
        <position position="122"/>
    </location>
    <ligand>
        <name>1-deoxy-D-xylulose 5-phosphate</name>
        <dbReference type="ChEBI" id="CHEBI:57792"/>
    </ligand>
</feature>
<feature type="binding site" evidence="1">
    <location>
        <position position="123"/>
    </location>
    <ligand>
        <name>NADPH</name>
        <dbReference type="ChEBI" id="CHEBI:57783"/>
    </ligand>
</feature>
<feature type="binding site" evidence="1">
    <location>
        <position position="147"/>
    </location>
    <ligand>
        <name>Mn(2+)</name>
        <dbReference type="ChEBI" id="CHEBI:29035"/>
    </ligand>
</feature>
<feature type="binding site" evidence="1">
    <location>
        <position position="148"/>
    </location>
    <ligand>
        <name>1-deoxy-D-xylulose 5-phosphate</name>
        <dbReference type="ChEBI" id="CHEBI:57792"/>
    </ligand>
</feature>
<feature type="binding site" evidence="1">
    <location>
        <position position="149"/>
    </location>
    <ligand>
        <name>1-deoxy-D-xylulose 5-phosphate</name>
        <dbReference type="ChEBI" id="CHEBI:57792"/>
    </ligand>
</feature>
<feature type="binding site" evidence="1">
    <location>
        <position position="149"/>
    </location>
    <ligand>
        <name>Mn(2+)</name>
        <dbReference type="ChEBI" id="CHEBI:29035"/>
    </ligand>
</feature>
<feature type="binding site" evidence="1">
    <location>
        <position position="185"/>
    </location>
    <ligand>
        <name>1-deoxy-D-xylulose 5-phosphate</name>
        <dbReference type="ChEBI" id="CHEBI:57792"/>
    </ligand>
</feature>
<feature type="binding site" evidence="1">
    <location>
        <position position="208"/>
    </location>
    <ligand>
        <name>1-deoxy-D-xylulose 5-phosphate</name>
        <dbReference type="ChEBI" id="CHEBI:57792"/>
    </ligand>
</feature>
<feature type="binding site" evidence="1">
    <location>
        <position position="214"/>
    </location>
    <ligand>
        <name>NADPH</name>
        <dbReference type="ChEBI" id="CHEBI:57783"/>
    </ligand>
</feature>
<feature type="binding site" evidence="1">
    <location>
        <position position="221"/>
    </location>
    <ligand>
        <name>1-deoxy-D-xylulose 5-phosphate</name>
        <dbReference type="ChEBI" id="CHEBI:57792"/>
    </ligand>
</feature>
<feature type="binding site" evidence="1">
    <location>
        <position position="226"/>
    </location>
    <ligand>
        <name>1-deoxy-D-xylulose 5-phosphate</name>
        <dbReference type="ChEBI" id="CHEBI:57792"/>
    </ligand>
</feature>
<feature type="binding site" evidence="1">
    <location>
        <position position="227"/>
    </location>
    <ligand>
        <name>1-deoxy-D-xylulose 5-phosphate</name>
        <dbReference type="ChEBI" id="CHEBI:57792"/>
    </ligand>
</feature>
<feature type="binding site" evidence="1">
    <location>
        <position position="230"/>
    </location>
    <ligand>
        <name>1-deoxy-D-xylulose 5-phosphate</name>
        <dbReference type="ChEBI" id="CHEBI:57792"/>
    </ligand>
</feature>
<feature type="binding site" evidence="1">
    <location>
        <position position="230"/>
    </location>
    <ligand>
        <name>Mn(2+)</name>
        <dbReference type="ChEBI" id="CHEBI:29035"/>
    </ligand>
</feature>
<name>DXR_PROMP</name>
<keyword id="KW-0414">Isoprene biosynthesis</keyword>
<keyword id="KW-0464">Manganese</keyword>
<keyword id="KW-0479">Metal-binding</keyword>
<keyword id="KW-0521">NADP</keyword>
<keyword id="KW-0560">Oxidoreductase</keyword>
<dbReference type="EC" id="1.1.1.267" evidence="1"/>
<dbReference type="EMBL" id="BX548174">
    <property type="protein sequence ID" value="CAE19601.1"/>
    <property type="molecule type" value="Genomic_DNA"/>
</dbReference>
<dbReference type="SMR" id="Q7V0W0"/>
<dbReference type="STRING" id="59919.PMM1142"/>
<dbReference type="KEGG" id="pmm:PMM1142"/>
<dbReference type="eggNOG" id="COG0743">
    <property type="taxonomic scope" value="Bacteria"/>
</dbReference>
<dbReference type="HOGENOM" id="CLU_035714_4_0_3"/>
<dbReference type="OrthoDB" id="9806546at2"/>
<dbReference type="UniPathway" id="UPA00056">
    <property type="reaction ID" value="UER00092"/>
</dbReference>
<dbReference type="Proteomes" id="UP000001026">
    <property type="component" value="Chromosome"/>
</dbReference>
<dbReference type="GO" id="GO:0030604">
    <property type="term" value="F:1-deoxy-D-xylulose-5-phosphate reductoisomerase activity"/>
    <property type="evidence" value="ECO:0007669"/>
    <property type="project" value="UniProtKB-UniRule"/>
</dbReference>
<dbReference type="GO" id="GO:0030145">
    <property type="term" value="F:manganese ion binding"/>
    <property type="evidence" value="ECO:0007669"/>
    <property type="project" value="TreeGrafter"/>
</dbReference>
<dbReference type="GO" id="GO:0070402">
    <property type="term" value="F:NADPH binding"/>
    <property type="evidence" value="ECO:0007669"/>
    <property type="project" value="InterPro"/>
</dbReference>
<dbReference type="GO" id="GO:0051484">
    <property type="term" value="P:isopentenyl diphosphate biosynthetic process, methylerythritol 4-phosphate pathway involved in terpenoid biosynthetic process"/>
    <property type="evidence" value="ECO:0007669"/>
    <property type="project" value="TreeGrafter"/>
</dbReference>
<dbReference type="FunFam" id="3.40.50.720:FF:000045">
    <property type="entry name" value="1-deoxy-D-xylulose 5-phosphate reductoisomerase"/>
    <property type="match status" value="1"/>
</dbReference>
<dbReference type="Gene3D" id="1.10.1740.10">
    <property type="match status" value="1"/>
</dbReference>
<dbReference type="Gene3D" id="3.40.50.720">
    <property type="entry name" value="NAD(P)-binding Rossmann-like Domain"/>
    <property type="match status" value="1"/>
</dbReference>
<dbReference type="HAMAP" id="MF_00183">
    <property type="entry name" value="DXP_reductoisom"/>
    <property type="match status" value="1"/>
</dbReference>
<dbReference type="InterPro" id="IPR003821">
    <property type="entry name" value="DXP_reductoisomerase"/>
</dbReference>
<dbReference type="InterPro" id="IPR013644">
    <property type="entry name" value="DXP_reductoisomerase_C"/>
</dbReference>
<dbReference type="InterPro" id="IPR013512">
    <property type="entry name" value="DXP_reductoisomerase_N"/>
</dbReference>
<dbReference type="InterPro" id="IPR026877">
    <property type="entry name" value="DXPR_C"/>
</dbReference>
<dbReference type="InterPro" id="IPR036169">
    <property type="entry name" value="DXPR_C_sf"/>
</dbReference>
<dbReference type="InterPro" id="IPR036291">
    <property type="entry name" value="NAD(P)-bd_dom_sf"/>
</dbReference>
<dbReference type="NCBIfam" id="TIGR00243">
    <property type="entry name" value="Dxr"/>
    <property type="match status" value="1"/>
</dbReference>
<dbReference type="NCBIfam" id="NF009114">
    <property type="entry name" value="PRK12464.1"/>
    <property type="match status" value="1"/>
</dbReference>
<dbReference type="PANTHER" id="PTHR30525">
    <property type="entry name" value="1-DEOXY-D-XYLULOSE 5-PHOSPHATE REDUCTOISOMERASE"/>
    <property type="match status" value="1"/>
</dbReference>
<dbReference type="PANTHER" id="PTHR30525:SF0">
    <property type="entry name" value="1-DEOXY-D-XYLULOSE 5-PHOSPHATE REDUCTOISOMERASE, CHLOROPLASTIC"/>
    <property type="match status" value="1"/>
</dbReference>
<dbReference type="Pfam" id="PF08436">
    <property type="entry name" value="DXP_redisom_C"/>
    <property type="match status" value="1"/>
</dbReference>
<dbReference type="Pfam" id="PF02670">
    <property type="entry name" value="DXP_reductoisom"/>
    <property type="match status" value="1"/>
</dbReference>
<dbReference type="Pfam" id="PF13288">
    <property type="entry name" value="DXPR_C"/>
    <property type="match status" value="1"/>
</dbReference>
<dbReference type="PIRSF" id="PIRSF006205">
    <property type="entry name" value="Dxp_reductismrs"/>
    <property type="match status" value="1"/>
</dbReference>
<dbReference type="SUPFAM" id="SSF69055">
    <property type="entry name" value="1-deoxy-D-xylulose-5-phosphate reductoisomerase, C-terminal domain"/>
    <property type="match status" value="1"/>
</dbReference>
<dbReference type="SUPFAM" id="SSF55347">
    <property type="entry name" value="Glyceraldehyde-3-phosphate dehydrogenase-like, C-terminal domain"/>
    <property type="match status" value="1"/>
</dbReference>
<dbReference type="SUPFAM" id="SSF51735">
    <property type="entry name" value="NAD(P)-binding Rossmann-fold domains"/>
    <property type="match status" value="1"/>
</dbReference>
<protein>
    <recommendedName>
        <fullName evidence="1">1-deoxy-D-xylulose 5-phosphate reductoisomerase</fullName>
        <shortName evidence="1">DXP reductoisomerase</shortName>
        <ecNumber evidence="1">1.1.1.267</ecNumber>
    </recommendedName>
    <alternativeName>
        <fullName evidence="1">1-deoxyxylulose-5-phosphate reductoisomerase</fullName>
    </alternativeName>
    <alternativeName>
        <fullName evidence="1">2-C-methyl-D-erythritol 4-phosphate synthase</fullName>
    </alternativeName>
</protein>
<proteinExistence type="inferred from homology"/>
<organism>
    <name type="scientific">Prochlorococcus marinus subsp. pastoris (strain CCMP1986 / NIES-2087 / MED4)</name>
    <dbReference type="NCBI Taxonomy" id="59919"/>
    <lineage>
        <taxon>Bacteria</taxon>
        <taxon>Bacillati</taxon>
        <taxon>Cyanobacteriota</taxon>
        <taxon>Cyanophyceae</taxon>
        <taxon>Synechococcales</taxon>
        <taxon>Prochlorococcaceae</taxon>
        <taxon>Prochlorococcus</taxon>
    </lineage>
</organism>
<sequence>MLGSTGSIGTQTLEIVSELPDKFKVVALSAGRNIDLLTEQVSQHKPEVIAIEDENLLTDLKNNINNLGISNPPIVLGGREAINSVAAWDSADTVITGIVGCAGLIPTMSAIKAGKNIALANKETLIAAGSVVIPALKESKSRLLPADSEHSAIFQCIQGLPNYENADFSTGQIPNGLKAIHLTASGGAFRDWEVEDLKNVTVEDATSHPNWSMGRKITVDSATLMNKGLEVIEAHYLFGTSYENIEIAIHPQSIIHSMIEMEDSSVLAQLGWPDMKLPILYAMSWPERFKTNWKRFNLTEIGQLTFKKPDEVKYPCMGLAYSAGKCSGTMPAVLNAANEMAVDQFLKEKISFQEIPIFINKTCESHLNKINLNPKLEDILEVDNWARIFVQEEIKKGKKYINVG</sequence>
<evidence type="ECO:0000255" key="1">
    <source>
        <dbReference type="HAMAP-Rule" id="MF_00183"/>
    </source>
</evidence>
<accession>Q7V0W0</accession>
<comment type="function">
    <text evidence="1">Catalyzes the NADPH-dependent rearrangement and reduction of 1-deoxy-D-xylulose-5-phosphate (DXP) to 2-C-methyl-D-erythritol 4-phosphate (MEP).</text>
</comment>
<comment type="catalytic activity">
    <reaction evidence="1">
        <text>2-C-methyl-D-erythritol 4-phosphate + NADP(+) = 1-deoxy-D-xylulose 5-phosphate + NADPH + H(+)</text>
        <dbReference type="Rhea" id="RHEA:13717"/>
        <dbReference type="ChEBI" id="CHEBI:15378"/>
        <dbReference type="ChEBI" id="CHEBI:57783"/>
        <dbReference type="ChEBI" id="CHEBI:57792"/>
        <dbReference type="ChEBI" id="CHEBI:58262"/>
        <dbReference type="ChEBI" id="CHEBI:58349"/>
        <dbReference type="EC" id="1.1.1.267"/>
    </reaction>
    <physiologicalReaction direction="right-to-left" evidence="1">
        <dbReference type="Rhea" id="RHEA:13719"/>
    </physiologicalReaction>
</comment>
<comment type="cofactor">
    <cofactor evidence="1">
        <name>Mg(2+)</name>
        <dbReference type="ChEBI" id="CHEBI:18420"/>
    </cofactor>
    <cofactor evidence="1">
        <name>Mn(2+)</name>
        <dbReference type="ChEBI" id="CHEBI:29035"/>
    </cofactor>
</comment>
<comment type="pathway">
    <text evidence="1">Isoprenoid biosynthesis; isopentenyl diphosphate biosynthesis via DXP pathway; isopentenyl diphosphate from 1-deoxy-D-xylulose 5-phosphate: step 1/6.</text>
</comment>
<comment type="similarity">
    <text evidence="1">Belongs to the DXR family.</text>
</comment>
<gene>
    <name evidence="1" type="primary">dxr</name>
    <name type="ordered locus">PMM1142</name>
</gene>
<reference key="1">
    <citation type="journal article" date="2003" name="Nature">
        <title>Genome divergence in two Prochlorococcus ecotypes reflects oceanic niche differentiation.</title>
        <authorList>
            <person name="Rocap G."/>
            <person name="Larimer F.W."/>
            <person name="Lamerdin J.E."/>
            <person name="Malfatti S."/>
            <person name="Chain P."/>
            <person name="Ahlgren N.A."/>
            <person name="Arellano A."/>
            <person name="Coleman M."/>
            <person name="Hauser L."/>
            <person name="Hess W.R."/>
            <person name="Johnson Z.I."/>
            <person name="Land M.L."/>
            <person name="Lindell D."/>
            <person name="Post A.F."/>
            <person name="Regala W."/>
            <person name="Shah M."/>
            <person name="Shaw S.L."/>
            <person name="Steglich C."/>
            <person name="Sullivan M.B."/>
            <person name="Ting C.S."/>
            <person name="Tolonen A."/>
            <person name="Webb E.A."/>
            <person name="Zinser E.R."/>
            <person name="Chisholm S.W."/>
        </authorList>
    </citation>
    <scope>NUCLEOTIDE SEQUENCE [LARGE SCALE GENOMIC DNA]</scope>
    <source>
        <strain>CCMP1986 / NIES-2087 / MED4</strain>
    </source>
</reference>